<protein>
    <recommendedName>
        <fullName evidence="1">Phosphate acyltransferase</fullName>
        <ecNumber evidence="1">2.3.1.274</ecNumber>
    </recommendedName>
    <alternativeName>
        <fullName evidence="1">Acyl-ACP phosphotransacylase</fullName>
    </alternativeName>
    <alternativeName>
        <fullName evidence="1">Acyl-[acyl-carrier-protein]--phosphate acyltransferase</fullName>
    </alternativeName>
    <alternativeName>
        <fullName evidence="1">Phosphate-acyl-ACP acyltransferase</fullName>
    </alternativeName>
</protein>
<reference key="1">
    <citation type="journal article" date="2008" name="Chem. Biol. Interact.">
        <title>Extending the Bacillus cereus group genomics to putative food-borne pathogens of different toxicity.</title>
        <authorList>
            <person name="Lapidus A."/>
            <person name="Goltsman E."/>
            <person name="Auger S."/>
            <person name="Galleron N."/>
            <person name="Segurens B."/>
            <person name="Dossat C."/>
            <person name="Land M.L."/>
            <person name="Broussolle V."/>
            <person name="Brillard J."/>
            <person name="Guinebretiere M.-H."/>
            <person name="Sanchis V."/>
            <person name="Nguen-the C."/>
            <person name="Lereclus D."/>
            <person name="Richardson P."/>
            <person name="Wincker P."/>
            <person name="Weissenbach J."/>
            <person name="Ehrlich S.D."/>
            <person name="Sorokin A."/>
        </authorList>
    </citation>
    <scope>NUCLEOTIDE SEQUENCE [LARGE SCALE GENOMIC DNA]</scope>
    <source>
        <strain>KBAB4</strain>
    </source>
</reference>
<evidence type="ECO:0000255" key="1">
    <source>
        <dbReference type="HAMAP-Rule" id="MF_00019"/>
    </source>
</evidence>
<feature type="chain" id="PRO_1000089878" description="Phosphate acyltransferase">
    <location>
        <begin position="1"/>
        <end position="330"/>
    </location>
</feature>
<comment type="function">
    <text evidence="1">Catalyzes the reversible formation of acyl-phosphate (acyl-PO(4)) from acyl-[acyl-carrier-protein] (acyl-ACP). This enzyme utilizes acyl-ACP as fatty acyl donor, but not acyl-CoA.</text>
</comment>
<comment type="catalytic activity">
    <reaction evidence="1">
        <text>a fatty acyl-[ACP] + phosphate = an acyl phosphate + holo-[ACP]</text>
        <dbReference type="Rhea" id="RHEA:42292"/>
        <dbReference type="Rhea" id="RHEA-COMP:9685"/>
        <dbReference type="Rhea" id="RHEA-COMP:14125"/>
        <dbReference type="ChEBI" id="CHEBI:43474"/>
        <dbReference type="ChEBI" id="CHEBI:59918"/>
        <dbReference type="ChEBI" id="CHEBI:64479"/>
        <dbReference type="ChEBI" id="CHEBI:138651"/>
        <dbReference type="EC" id="2.3.1.274"/>
    </reaction>
</comment>
<comment type="pathway">
    <text evidence="1">Lipid metabolism; phospholipid metabolism.</text>
</comment>
<comment type="subunit">
    <text evidence="1">Homodimer. Probably interacts with PlsY.</text>
</comment>
<comment type="subcellular location">
    <subcellularLocation>
        <location evidence="1">Cytoplasm</location>
    </subcellularLocation>
    <text evidence="1">Associated with the membrane possibly through PlsY.</text>
</comment>
<comment type="similarity">
    <text evidence="1">Belongs to the PlsX family.</text>
</comment>
<gene>
    <name evidence="1" type="primary">plsX</name>
    <name type="ordered locus">BcerKBAB4_3676</name>
</gene>
<organism>
    <name type="scientific">Bacillus mycoides (strain KBAB4)</name>
    <name type="common">Bacillus weihenstephanensis</name>
    <dbReference type="NCBI Taxonomy" id="315730"/>
    <lineage>
        <taxon>Bacteria</taxon>
        <taxon>Bacillati</taxon>
        <taxon>Bacillota</taxon>
        <taxon>Bacilli</taxon>
        <taxon>Bacillales</taxon>
        <taxon>Bacillaceae</taxon>
        <taxon>Bacillus</taxon>
        <taxon>Bacillus cereus group</taxon>
    </lineage>
</organism>
<keyword id="KW-0963">Cytoplasm</keyword>
<keyword id="KW-0444">Lipid biosynthesis</keyword>
<keyword id="KW-0443">Lipid metabolism</keyword>
<keyword id="KW-0594">Phospholipid biosynthesis</keyword>
<keyword id="KW-1208">Phospholipid metabolism</keyword>
<keyword id="KW-0808">Transferase</keyword>
<accession>A9VT91</accession>
<dbReference type="EC" id="2.3.1.274" evidence="1"/>
<dbReference type="EMBL" id="CP000903">
    <property type="protein sequence ID" value="ABY44847.1"/>
    <property type="molecule type" value="Genomic_DNA"/>
</dbReference>
<dbReference type="RefSeq" id="WP_002128828.1">
    <property type="nucleotide sequence ID" value="NC_010184.1"/>
</dbReference>
<dbReference type="SMR" id="A9VT91"/>
<dbReference type="GeneID" id="66266583"/>
<dbReference type="KEGG" id="bwe:BcerKBAB4_3676"/>
<dbReference type="eggNOG" id="COG0416">
    <property type="taxonomic scope" value="Bacteria"/>
</dbReference>
<dbReference type="HOGENOM" id="CLU_039379_1_1_9"/>
<dbReference type="UniPathway" id="UPA00085"/>
<dbReference type="Proteomes" id="UP000002154">
    <property type="component" value="Chromosome"/>
</dbReference>
<dbReference type="GO" id="GO:0005737">
    <property type="term" value="C:cytoplasm"/>
    <property type="evidence" value="ECO:0007669"/>
    <property type="project" value="UniProtKB-SubCell"/>
</dbReference>
<dbReference type="GO" id="GO:0043811">
    <property type="term" value="F:phosphate:acyl-[acyl carrier protein] acyltransferase activity"/>
    <property type="evidence" value="ECO:0007669"/>
    <property type="project" value="UniProtKB-UniRule"/>
</dbReference>
<dbReference type="GO" id="GO:0006633">
    <property type="term" value="P:fatty acid biosynthetic process"/>
    <property type="evidence" value="ECO:0007669"/>
    <property type="project" value="UniProtKB-UniRule"/>
</dbReference>
<dbReference type="GO" id="GO:0008654">
    <property type="term" value="P:phospholipid biosynthetic process"/>
    <property type="evidence" value="ECO:0007669"/>
    <property type="project" value="UniProtKB-KW"/>
</dbReference>
<dbReference type="Gene3D" id="3.40.718.10">
    <property type="entry name" value="Isopropylmalate Dehydrogenase"/>
    <property type="match status" value="1"/>
</dbReference>
<dbReference type="HAMAP" id="MF_00019">
    <property type="entry name" value="PlsX"/>
    <property type="match status" value="1"/>
</dbReference>
<dbReference type="InterPro" id="IPR003664">
    <property type="entry name" value="FA_synthesis"/>
</dbReference>
<dbReference type="InterPro" id="IPR012281">
    <property type="entry name" value="Phospholipid_synth_PlsX-like"/>
</dbReference>
<dbReference type="NCBIfam" id="TIGR00182">
    <property type="entry name" value="plsX"/>
    <property type="match status" value="1"/>
</dbReference>
<dbReference type="PANTHER" id="PTHR30100">
    <property type="entry name" value="FATTY ACID/PHOSPHOLIPID SYNTHESIS PROTEIN PLSX"/>
    <property type="match status" value="1"/>
</dbReference>
<dbReference type="PANTHER" id="PTHR30100:SF1">
    <property type="entry name" value="PHOSPHATE ACYLTRANSFERASE"/>
    <property type="match status" value="1"/>
</dbReference>
<dbReference type="Pfam" id="PF02504">
    <property type="entry name" value="FA_synthesis"/>
    <property type="match status" value="1"/>
</dbReference>
<dbReference type="PIRSF" id="PIRSF002465">
    <property type="entry name" value="Phsphlp_syn_PlsX"/>
    <property type="match status" value="1"/>
</dbReference>
<dbReference type="SUPFAM" id="SSF53659">
    <property type="entry name" value="Isocitrate/Isopropylmalate dehydrogenase-like"/>
    <property type="match status" value="1"/>
</dbReference>
<name>PLSX_BACMK</name>
<sequence>MKIAIDAMGGDHAPKAVVLGAMKAIKEYSDLHITLVGKEEGIRQYLTSEERITILHTDEKIESTDEPVRAVRRKKQASMVLAAQQVKDGVADACISAGSTGALMAAGLFVVGRMEGIERPALSPTMPTVDGEGFVMLDVGANVDAKPIHLYQYAVMGSVYAEKVRGIKNPRVGLLNVGTEDGKGNELSKQVFAMLKDAPINFVGNVESRDLLQGVADVVVCDGFTGNVALKSLEGTALALFSMLKEQLMSSFTSKLAAAVLKPKLMVLKDKMDYSEYGGAALFGLKAPVIKAHGSSNDQSIFSAIRQTREMVAKEVIPTISSVMEKEPLQ</sequence>
<proteinExistence type="inferred from homology"/>